<protein>
    <recommendedName>
        <fullName>Uncharacterized protein AF_1562</fullName>
    </recommendedName>
</protein>
<organism>
    <name type="scientific">Archaeoglobus fulgidus (strain ATCC 49558 / DSM 4304 / JCM 9628 / NBRC 100126 / VC-16)</name>
    <dbReference type="NCBI Taxonomy" id="224325"/>
    <lineage>
        <taxon>Archaea</taxon>
        <taxon>Methanobacteriati</taxon>
        <taxon>Methanobacteriota</taxon>
        <taxon>Archaeoglobi</taxon>
        <taxon>Archaeoglobales</taxon>
        <taxon>Archaeoglobaceae</taxon>
        <taxon>Archaeoglobus</taxon>
    </lineage>
</organism>
<comment type="subcellular location">
    <subcellularLocation>
        <location evidence="2">Cell membrane</location>
        <topology evidence="2">Multi-pass membrane protein</topology>
    </subcellularLocation>
</comment>
<gene>
    <name type="ordered locus">AF_1562</name>
</gene>
<feature type="chain" id="PRO_0000128023" description="Uncharacterized protein AF_1562">
    <location>
        <begin position="1"/>
        <end position="140"/>
    </location>
</feature>
<feature type="transmembrane region" description="Helical" evidence="1">
    <location>
        <begin position="20"/>
        <end position="42"/>
    </location>
</feature>
<feature type="transmembrane region" description="Helical" evidence="1">
    <location>
        <begin position="88"/>
        <end position="110"/>
    </location>
</feature>
<feature type="transmembrane region" description="Helical" evidence="1">
    <location>
        <begin position="115"/>
        <end position="137"/>
    </location>
</feature>
<keyword id="KW-1003">Cell membrane</keyword>
<keyword id="KW-0472">Membrane</keyword>
<keyword id="KW-1185">Reference proteome</keyword>
<keyword id="KW-0812">Transmembrane</keyword>
<keyword id="KW-1133">Transmembrane helix</keyword>
<reference key="1">
    <citation type="journal article" date="1997" name="Nature">
        <title>The complete genome sequence of the hyperthermophilic, sulphate-reducing archaeon Archaeoglobus fulgidus.</title>
        <authorList>
            <person name="Klenk H.-P."/>
            <person name="Clayton R.A."/>
            <person name="Tomb J.-F."/>
            <person name="White O."/>
            <person name="Nelson K.E."/>
            <person name="Ketchum K.A."/>
            <person name="Dodson R.J."/>
            <person name="Gwinn M.L."/>
            <person name="Hickey E.K."/>
            <person name="Peterson J.D."/>
            <person name="Richardson D.L."/>
            <person name="Kerlavage A.R."/>
            <person name="Graham D.E."/>
            <person name="Kyrpides N.C."/>
            <person name="Fleischmann R.D."/>
            <person name="Quackenbush J."/>
            <person name="Lee N.H."/>
            <person name="Sutton G.G."/>
            <person name="Gill S.R."/>
            <person name="Kirkness E.F."/>
            <person name="Dougherty B.A."/>
            <person name="McKenney K."/>
            <person name="Adams M.D."/>
            <person name="Loftus B.J."/>
            <person name="Peterson S.N."/>
            <person name="Reich C.I."/>
            <person name="McNeil L.K."/>
            <person name="Badger J.H."/>
            <person name="Glodek A."/>
            <person name="Zhou L."/>
            <person name="Overbeek R."/>
            <person name="Gocayne J.D."/>
            <person name="Weidman J.F."/>
            <person name="McDonald L.A."/>
            <person name="Utterback T.R."/>
            <person name="Cotton M.D."/>
            <person name="Spriggs T."/>
            <person name="Artiach P."/>
            <person name="Kaine B.P."/>
            <person name="Sykes S.M."/>
            <person name="Sadow P.W."/>
            <person name="D'Andrea K.P."/>
            <person name="Bowman C."/>
            <person name="Fujii C."/>
            <person name="Garland S.A."/>
            <person name="Mason T.M."/>
            <person name="Olsen G.J."/>
            <person name="Fraser C.M."/>
            <person name="Smith H.O."/>
            <person name="Woese C.R."/>
            <person name="Venter J.C."/>
        </authorList>
    </citation>
    <scope>NUCLEOTIDE SEQUENCE [LARGE SCALE GENOMIC DNA]</scope>
    <source>
        <strain>ATCC 49558 / DSM 4304 / JCM 9628 / NBRC 100126 / VC-16</strain>
    </source>
</reference>
<name>Y1562_ARCFU</name>
<sequence length="140" mass="15668">MVKMDRGRKVPEEQIIYADILYYGGLIGIIFMAITFAIYVSGTLPSLVKPEELTELWTHDTHYYLEETGLPTGWGWINYVTYGDVLNFVALAFLAMITIICYLAIIPVLLKKKDIIYTILAIAEVIILLLAASGLLQAGH</sequence>
<evidence type="ECO:0000255" key="1"/>
<evidence type="ECO:0000305" key="2"/>
<accession>O28710</accession>
<proteinExistence type="predicted"/>
<dbReference type="EMBL" id="AE000782">
    <property type="protein sequence ID" value="AAB89687.1"/>
    <property type="molecule type" value="Genomic_DNA"/>
</dbReference>
<dbReference type="PIR" id="A69445">
    <property type="entry name" value="A69445"/>
</dbReference>
<dbReference type="SMR" id="O28710"/>
<dbReference type="STRING" id="224325.AF_1562"/>
<dbReference type="PaxDb" id="224325-AF_1562"/>
<dbReference type="EnsemblBacteria" id="AAB89687">
    <property type="protein sequence ID" value="AAB89687"/>
    <property type="gene ID" value="AF_1562"/>
</dbReference>
<dbReference type="KEGG" id="afu:AF_1562"/>
<dbReference type="eggNOG" id="arCOG10391">
    <property type="taxonomic scope" value="Archaea"/>
</dbReference>
<dbReference type="HOGENOM" id="CLU_151167_0_0_2"/>
<dbReference type="Proteomes" id="UP000002199">
    <property type="component" value="Chromosome"/>
</dbReference>
<dbReference type="GO" id="GO:0005886">
    <property type="term" value="C:plasma membrane"/>
    <property type="evidence" value="ECO:0007669"/>
    <property type="project" value="UniProtKB-SubCell"/>
</dbReference>